<proteinExistence type="inferred from homology"/>
<keyword id="KW-0119">Carbohydrate metabolism</keyword>
<keyword id="KW-0963">Cytoplasm</keyword>
<keyword id="KW-0378">Hydrolase</keyword>
<keyword id="KW-0460">Magnesium</keyword>
<keyword id="KW-0479">Metal-binding</keyword>
<keyword id="KW-1185">Reference proteome</keyword>
<accession>Q6LV59</accession>
<name>F16PA_PHOPR</name>
<gene>
    <name evidence="1" type="primary">fbp</name>
    <name type="ordered locus">PBPRA0384</name>
</gene>
<organism>
    <name type="scientific">Photobacterium profundum (strain SS9)</name>
    <dbReference type="NCBI Taxonomy" id="298386"/>
    <lineage>
        <taxon>Bacteria</taxon>
        <taxon>Pseudomonadati</taxon>
        <taxon>Pseudomonadota</taxon>
        <taxon>Gammaproteobacteria</taxon>
        <taxon>Vibrionales</taxon>
        <taxon>Vibrionaceae</taxon>
        <taxon>Photobacterium</taxon>
    </lineage>
</organism>
<dbReference type="EC" id="3.1.3.11" evidence="1"/>
<dbReference type="EMBL" id="CR378664">
    <property type="protein sequence ID" value="CAG18816.1"/>
    <property type="status" value="ALT_INIT"/>
    <property type="molecule type" value="Genomic_DNA"/>
</dbReference>
<dbReference type="RefSeq" id="WP_041393853.1">
    <property type="nucleotide sequence ID" value="NC_006370.1"/>
</dbReference>
<dbReference type="SMR" id="Q6LV59"/>
<dbReference type="STRING" id="298386.PBPRA0384"/>
<dbReference type="KEGG" id="ppr:PBPRA0384"/>
<dbReference type="eggNOG" id="COG0158">
    <property type="taxonomic scope" value="Bacteria"/>
</dbReference>
<dbReference type="HOGENOM" id="CLU_039977_2_2_6"/>
<dbReference type="UniPathway" id="UPA00138"/>
<dbReference type="Proteomes" id="UP000000593">
    <property type="component" value="Chromosome 1"/>
</dbReference>
<dbReference type="GO" id="GO:0005829">
    <property type="term" value="C:cytosol"/>
    <property type="evidence" value="ECO:0007669"/>
    <property type="project" value="TreeGrafter"/>
</dbReference>
<dbReference type="GO" id="GO:0042132">
    <property type="term" value="F:fructose 1,6-bisphosphate 1-phosphatase activity"/>
    <property type="evidence" value="ECO:0007669"/>
    <property type="project" value="UniProtKB-UniRule"/>
</dbReference>
<dbReference type="GO" id="GO:0000287">
    <property type="term" value="F:magnesium ion binding"/>
    <property type="evidence" value="ECO:0007669"/>
    <property type="project" value="UniProtKB-UniRule"/>
</dbReference>
<dbReference type="GO" id="GO:0030388">
    <property type="term" value="P:fructose 1,6-bisphosphate metabolic process"/>
    <property type="evidence" value="ECO:0007669"/>
    <property type="project" value="TreeGrafter"/>
</dbReference>
<dbReference type="GO" id="GO:0006002">
    <property type="term" value="P:fructose 6-phosphate metabolic process"/>
    <property type="evidence" value="ECO:0007669"/>
    <property type="project" value="TreeGrafter"/>
</dbReference>
<dbReference type="GO" id="GO:0006000">
    <property type="term" value="P:fructose metabolic process"/>
    <property type="evidence" value="ECO:0007669"/>
    <property type="project" value="TreeGrafter"/>
</dbReference>
<dbReference type="GO" id="GO:0006094">
    <property type="term" value="P:gluconeogenesis"/>
    <property type="evidence" value="ECO:0007669"/>
    <property type="project" value="UniProtKB-UniRule"/>
</dbReference>
<dbReference type="GO" id="GO:0005986">
    <property type="term" value="P:sucrose biosynthetic process"/>
    <property type="evidence" value="ECO:0007669"/>
    <property type="project" value="TreeGrafter"/>
</dbReference>
<dbReference type="CDD" id="cd00354">
    <property type="entry name" value="FBPase"/>
    <property type="match status" value="1"/>
</dbReference>
<dbReference type="FunFam" id="3.30.540.10:FF:000002">
    <property type="entry name" value="Fructose-1,6-bisphosphatase class 1"/>
    <property type="match status" value="1"/>
</dbReference>
<dbReference type="FunFam" id="3.40.190.80:FF:000001">
    <property type="entry name" value="Fructose-1,6-bisphosphatase class 1"/>
    <property type="match status" value="1"/>
</dbReference>
<dbReference type="Gene3D" id="3.40.190.80">
    <property type="match status" value="1"/>
</dbReference>
<dbReference type="Gene3D" id="3.30.540.10">
    <property type="entry name" value="Fructose-1,6-Bisphosphatase, subunit A, domain 1"/>
    <property type="match status" value="1"/>
</dbReference>
<dbReference type="HAMAP" id="MF_01855">
    <property type="entry name" value="FBPase_class1"/>
    <property type="match status" value="1"/>
</dbReference>
<dbReference type="InterPro" id="IPR044015">
    <property type="entry name" value="FBPase_C_dom"/>
</dbReference>
<dbReference type="InterPro" id="IPR000146">
    <property type="entry name" value="FBPase_class-1"/>
</dbReference>
<dbReference type="InterPro" id="IPR033391">
    <property type="entry name" value="FBPase_N"/>
</dbReference>
<dbReference type="InterPro" id="IPR028343">
    <property type="entry name" value="FBPtase"/>
</dbReference>
<dbReference type="InterPro" id="IPR020548">
    <property type="entry name" value="Fructose_bisphosphatase_AS"/>
</dbReference>
<dbReference type="NCBIfam" id="NF006778">
    <property type="entry name" value="PRK09293.1-1"/>
    <property type="match status" value="1"/>
</dbReference>
<dbReference type="NCBIfam" id="NF006779">
    <property type="entry name" value="PRK09293.1-3"/>
    <property type="match status" value="1"/>
</dbReference>
<dbReference type="PANTHER" id="PTHR11556">
    <property type="entry name" value="FRUCTOSE-1,6-BISPHOSPHATASE-RELATED"/>
    <property type="match status" value="1"/>
</dbReference>
<dbReference type="PANTHER" id="PTHR11556:SF35">
    <property type="entry name" value="SEDOHEPTULOSE-1,7-BISPHOSPHATASE, CHLOROPLASTIC"/>
    <property type="match status" value="1"/>
</dbReference>
<dbReference type="Pfam" id="PF00316">
    <property type="entry name" value="FBPase"/>
    <property type="match status" value="1"/>
</dbReference>
<dbReference type="Pfam" id="PF18913">
    <property type="entry name" value="FBPase_C"/>
    <property type="match status" value="1"/>
</dbReference>
<dbReference type="PIRSF" id="PIRSF500210">
    <property type="entry name" value="FBPtase"/>
    <property type="match status" value="1"/>
</dbReference>
<dbReference type="PIRSF" id="PIRSF000904">
    <property type="entry name" value="FBPtase_SBPase"/>
    <property type="match status" value="1"/>
</dbReference>
<dbReference type="PRINTS" id="PR00115">
    <property type="entry name" value="F16BPHPHTASE"/>
</dbReference>
<dbReference type="SUPFAM" id="SSF56655">
    <property type="entry name" value="Carbohydrate phosphatase"/>
    <property type="match status" value="1"/>
</dbReference>
<dbReference type="PROSITE" id="PS00124">
    <property type="entry name" value="FBPASE"/>
    <property type="match status" value="1"/>
</dbReference>
<feature type="chain" id="PRO_0000364626" description="Fructose-1,6-bisphosphatase class 1">
    <location>
        <begin position="1"/>
        <end position="338"/>
    </location>
</feature>
<feature type="binding site" evidence="1">
    <location>
        <position position="92"/>
    </location>
    <ligand>
        <name>Mg(2+)</name>
        <dbReference type="ChEBI" id="CHEBI:18420"/>
        <label>1</label>
    </ligand>
</feature>
<feature type="binding site" evidence="1">
    <location>
        <position position="115"/>
    </location>
    <ligand>
        <name>Mg(2+)</name>
        <dbReference type="ChEBI" id="CHEBI:18420"/>
        <label>1</label>
    </ligand>
</feature>
<feature type="binding site" evidence="1">
    <location>
        <position position="115"/>
    </location>
    <ligand>
        <name>Mg(2+)</name>
        <dbReference type="ChEBI" id="CHEBI:18420"/>
        <label>2</label>
    </ligand>
</feature>
<feature type="binding site" evidence="1">
    <location>
        <position position="117"/>
    </location>
    <ligand>
        <name>Mg(2+)</name>
        <dbReference type="ChEBI" id="CHEBI:18420"/>
        <label>1</label>
    </ligand>
</feature>
<feature type="binding site" evidence="1">
    <location>
        <begin position="118"/>
        <end position="121"/>
    </location>
    <ligand>
        <name>substrate</name>
    </ligand>
</feature>
<feature type="binding site" evidence="1">
    <location>
        <position position="118"/>
    </location>
    <ligand>
        <name>Mg(2+)</name>
        <dbReference type="ChEBI" id="CHEBI:18420"/>
        <label>2</label>
    </ligand>
</feature>
<feature type="binding site" evidence="1">
    <location>
        <position position="211"/>
    </location>
    <ligand>
        <name>substrate</name>
    </ligand>
</feature>
<feature type="binding site" evidence="1">
    <location>
        <position position="244"/>
    </location>
    <ligand>
        <name>substrate</name>
    </ligand>
</feature>
<feature type="binding site" evidence="1">
    <location>
        <position position="274"/>
    </location>
    <ligand>
        <name>substrate</name>
    </ligand>
</feature>
<feature type="binding site" evidence="1">
    <location>
        <position position="280"/>
    </location>
    <ligand>
        <name>Mg(2+)</name>
        <dbReference type="ChEBI" id="CHEBI:18420"/>
        <label>2</label>
    </ligand>
</feature>
<protein>
    <recommendedName>
        <fullName evidence="1">Fructose-1,6-bisphosphatase class 1</fullName>
        <shortName evidence="1">FBPase class 1</shortName>
        <ecNumber evidence="1">3.1.3.11</ecNumber>
    </recommendedName>
    <alternativeName>
        <fullName evidence="1">D-fructose-1,6-bisphosphate 1-phosphohydrolase class 1</fullName>
    </alternativeName>
</protein>
<evidence type="ECO:0000255" key="1">
    <source>
        <dbReference type="HAMAP-Rule" id="MF_01855"/>
    </source>
</evidence>
<evidence type="ECO:0000305" key="2"/>
<comment type="catalytic activity">
    <reaction evidence="1">
        <text>beta-D-fructose 1,6-bisphosphate + H2O = beta-D-fructose 6-phosphate + phosphate</text>
        <dbReference type="Rhea" id="RHEA:11064"/>
        <dbReference type="ChEBI" id="CHEBI:15377"/>
        <dbReference type="ChEBI" id="CHEBI:32966"/>
        <dbReference type="ChEBI" id="CHEBI:43474"/>
        <dbReference type="ChEBI" id="CHEBI:57634"/>
        <dbReference type="EC" id="3.1.3.11"/>
    </reaction>
</comment>
<comment type="cofactor">
    <cofactor evidence="1">
        <name>Mg(2+)</name>
        <dbReference type="ChEBI" id="CHEBI:18420"/>
    </cofactor>
    <text evidence="1">Binds 2 magnesium ions per subunit.</text>
</comment>
<comment type="pathway">
    <text evidence="1">Carbohydrate biosynthesis; gluconeogenesis.</text>
</comment>
<comment type="subunit">
    <text evidence="1">Homotetramer.</text>
</comment>
<comment type="subcellular location">
    <subcellularLocation>
        <location evidence="1">Cytoplasm</location>
    </subcellularLocation>
</comment>
<comment type="similarity">
    <text evidence="1">Belongs to the FBPase class 1 family.</text>
</comment>
<comment type="sequence caution" evidence="2">
    <conflict type="erroneous initiation">
        <sequence resource="EMBL-CDS" id="CAG18816"/>
    </conflict>
</comment>
<reference key="1">
    <citation type="journal article" date="2005" name="Science">
        <title>Life at depth: Photobacterium profundum genome sequence and expression analysis.</title>
        <authorList>
            <person name="Vezzi A."/>
            <person name="Campanaro S."/>
            <person name="D'Angelo M."/>
            <person name="Simonato F."/>
            <person name="Vitulo N."/>
            <person name="Lauro F.M."/>
            <person name="Cestaro A."/>
            <person name="Malacrida G."/>
            <person name="Simionati B."/>
            <person name="Cannata N."/>
            <person name="Romualdi C."/>
            <person name="Bartlett D.H."/>
            <person name="Valle G."/>
        </authorList>
    </citation>
    <scope>NUCLEOTIDE SEQUENCE [LARGE SCALE GENOMIC DNA]</scope>
    <source>
        <strain>ATCC BAA-1253 / SS9</strain>
    </source>
</reference>
<sequence length="338" mass="37536">MPNMKTLGEFIVEKQNDFPHASGDLSSLLGSIKLAAKIVNREINKAGLVDITGAIGSENVQGEEQQKLDLYANDKFKAAMEARDQVCGVASEEEDEAVTFNKDLNRNAKYVILMDPLDGSSNIDVNVSVGTIFSIYRRVSPIGTTPTQDDFLQPGNQQVAAGYVIYGSSTMLVYTTGNGIHGFTYDPSLGVFCLSHENMQIPEDGQIYSINEGNYIRFPQGVKKYIKFCQEDVPADNRPYTSRYIGSLVSDFHRNLLKGGIYMYPSTAMYPNGKLRLLYECNPMAFLMEQAGGVASDGKNRILDITPTELHQRVPFFVGSTNMVKQVESFIEEYPEQH</sequence>